<comment type="function">
    <text evidence="1">One of several proteins that assist in the late maturation steps of the functional core of the 30S ribosomal subunit. Helps release RbfA from mature subunits. May play a role in the assembly of ribosomal proteins into the subunit. Circularly permuted GTPase that catalyzes slow GTP hydrolysis, GTPase activity is stimulated by the 30S ribosomal subunit.</text>
</comment>
<comment type="cofactor">
    <cofactor evidence="1">
        <name>Zn(2+)</name>
        <dbReference type="ChEBI" id="CHEBI:29105"/>
    </cofactor>
    <text evidence="1">Binds 1 zinc ion per subunit.</text>
</comment>
<comment type="subunit">
    <text evidence="1">Monomer. Associates with 30S ribosomal subunit, binds 16S rRNA.</text>
</comment>
<comment type="subcellular location">
    <subcellularLocation>
        <location evidence="1">Cytoplasm</location>
    </subcellularLocation>
</comment>
<comment type="similarity">
    <text evidence="1">Belongs to the TRAFAC class YlqF/YawG GTPase family. RsgA subfamily.</text>
</comment>
<reference key="1">
    <citation type="journal article" date="2004" name="Nat. Biotechnol.">
        <title>The genome sequence of the capnophilic rumen bacterium Mannheimia succiniciproducens.</title>
        <authorList>
            <person name="Hong S.H."/>
            <person name="Kim J.S."/>
            <person name="Lee S.Y."/>
            <person name="In Y.H."/>
            <person name="Choi S.S."/>
            <person name="Rih J.-K."/>
            <person name="Kim C.H."/>
            <person name="Jeong H."/>
            <person name="Hur C.G."/>
            <person name="Kim J.J."/>
        </authorList>
    </citation>
    <scope>NUCLEOTIDE SEQUENCE [LARGE SCALE GENOMIC DNA]</scope>
    <source>
        <strain>KCTC 0769BP / MBEL55E</strain>
    </source>
</reference>
<accession>Q65SE2</accession>
<gene>
    <name evidence="1" type="primary">rsgA</name>
    <name type="ordered locus">MS1511</name>
</gene>
<sequence>MTKRKLTQNQKRRIHSNNVKALDRHHRRAKKEIDWQEEMLGDTQDGVVVTRYSMHADVENSQGEIFRCNLRRTLANVVVGDHVVWRRGHEKLQGISGVIEAIKPRENEIARPDYYDGLKVMASNIDRIIIVSSVLPALSLNIIDRYLVICENANIPAVILLNKVDLLTDEQWREAEEQLEIYRKIGYETLMISAISGKNMEKLTALLADGTSIFVGQSGVGKSSLINYILPEVNAQTGEISETSGLGQHTTTSSRLYHLPQGGNLIDSPGIREFGLWHLEPAQITNGYREFQYFLGTCKFRDCKHIDDPGCALREAVELGKIHPVRFDNYHRLISSREENKSQRHFMEQDIR</sequence>
<proteinExistence type="inferred from homology"/>
<organism>
    <name type="scientific">Mannheimia succiniciproducens (strain KCTC 0769BP / MBEL55E)</name>
    <dbReference type="NCBI Taxonomy" id="221988"/>
    <lineage>
        <taxon>Bacteria</taxon>
        <taxon>Pseudomonadati</taxon>
        <taxon>Pseudomonadota</taxon>
        <taxon>Gammaproteobacteria</taxon>
        <taxon>Pasteurellales</taxon>
        <taxon>Pasteurellaceae</taxon>
        <taxon>Basfia</taxon>
    </lineage>
</organism>
<feature type="chain" id="PRO_1000188099" description="Small ribosomal subunit biogenesis GTPase RsgA">
    <location>
        <begin position="1"/>
        <end position="352"/>
    </location>
</feature>
<feature type="domain" description="CP-type G" evidence="2">
    <location>
        <begin position="106"/>
        <end position="274"/>
    </location>
</feature>
<feature type="region of interest" description="Disordered" evidence="3">
    <location>
        <begin position="1"/>
        <end position="26"/>
    </location>
</feature>
<feature type="compositionally biased region" description="Basic residues" evidence="3">
    <location>
        <begin position="1"/>
        <end position="15"/>
    </location>
</feature>
<feature type="binding site" evidence="1">
    <location>
        <begin position="162"/>
        <end position="165"/>
    </location>
    <ligand>
        <name>GTP</name>
        <dbReference type="ChEBI" id="CHEBI:37565"/>
    </ligand>
</feature>
<feature type="binding site" evidence="1">
    <location>
        <begin position="216"/>
        <end position="224"/>
    </location>
    <ligand>
        <name>GTP</name>
        <dbReference type="ChEBI" id="CHEBI:37565"/>
    </ligand>
</feature>
<feature type="binding site" evidence="1">
    <location>
        <position position="298"/>
    </location>
    <ligand>
        <name>Zn(2+)</name>
        <dbReference type="ChEBI" id="CHEBI:29105"/>
    </ligand>
</feature>
<feature type="binding site" evidence="1">
    <location>
        <position position="303"/>
    </location>
    <ligand>
        <name>Zn(2+)</name>
        <dbReference type="ChEBI" id="CHEBI:29105"/>
    </ligand>
</feature>
<feature type="binding site" evidence="1">
    <location>
        <position position="305"/>
    </location>
    <ligand>
        <name>Zn(2+)</name>
        <dbReference type="ChEBI" id="CHEBI:29105"/>
    </ligand>
</feature>
<feature type="binding site" evidence="1">
    <location>
        <position position="311"/>
    </location>
    <ligand>
        <name>Zn(2+)</name>
        <dbReference type="ChEBI" id="CHEBI:29105"/>
    </ligand>
</feature>
<protein>
    <recommendedName>
        <fullName evidence="1">Small ribosomal subunit biogenesis GTPase RsgA</fullName>
        <ecNumber evidence="1">3.6.1.-</ecNumber>
    </recommendedName>
</protein>
<keyword id="KW-0963">Cytoplasm</keyword>
<keyword id="KW-0342">GTP-binding</keyword>
<keyword id="KW-0378">Hydrolase</keyword>
<keyword id="KW-0479">Metal-binding</keyword>
<keyword id="KW-0547">Nucleotide-binding</keyword>
<keyword id="KW-0690">Ribosome biogenesis</keyword>
<keyword id="KW-0694">RNA-binding</keyword>
<keyword id="KW-0699">rRNA-binding</keyword>
<keyword id="KW-0862">Zinc</keyword>
<dbReference type="EC" id="3.6.1.-" evidence="1"/>
<dbReference type="EMBL" id="AE016827">
    <property type="protein sequence ID" value="AAU38118.1"/>
    <property type="molecule type" value="Genomic_DNA"/>
</dbReference>
<dbReference type="RefSeq" id="WP_011200684.1">
    <property type="nucleotide sequence ID" value="NC_006300.1"/>
</dbReference>
<dbReference type="SMR" id="Q65SE2"/>
<dbReference type="STRING" id="221988.MS1511"/>
<dbReference type="KEGG" id="msu:MS1511"/>
<dbReference type="eggNOG" id="COG1162">
    <property type="taxonomic scope" value="Bacteria"/>
</dbReference>
<dbReference type="HOGENOM" id="CLU_033617_2_0_6"/>
<dbReference type="OrthoDB" id="9809485at2"/>
<dbReference type="Proteomes" id="UP000000607">
    <property type="component" value="Chromosome"/>
</dbReference>
<dbReference type="GO" id="GO:0005737">
    <property type="term" value="C:cytoplasm"/>
    <property type="evidence" value="ECO:0007669"/>
    <property type="project" value="UniProtKB-SubCell"/>
</dbReference>
<dbReference type="GO" id="GO:0005525">
    <property type="term" value="F:GTP binding"/>
    <property type="evidence" value="ECO:0007669"/>
    <property type="project" value="UniProtKB-UniRule"/>
</dbReference>
<dbReference type="GO" id="GO:0003924">
    <property type="term" value="F:GTPase activity"/>
    <property type="evidence" value="ECO:0007669"/>
    <property type="project" value="UniProtKB-UniRule"/>
</dbReference>
<dbReference type="GO" id="GO:0046872">
    <property type="term" value="F:metal ion binding"/>
    <property type="evidence" value="ECO:0007669"/>
    <property type="project" value="UniProtKB-KW"/>
</dbReference>
<dbReference type="GO" id="GO:0019843">
    <property type="term" value="F:rRNA binding"/>
    <property type="evidence" value="ECO:0007669"/>
    <property type="project" value="UniProtKB-KW"/>
</dbReference>
<dbReference type="GO" id="GO:0042274">
    <property type="term" value="P:ribosomal small subunit biogenesis"/>
    <property type="evidence" value="ECO:0007669"/>
    <property type="project" value="UniProtKB-UniRule"/>
</dbReference>
<dbReference type="CDD" id="cd01854">
    <property type="entry name" value="YjeQ_EngC"/>
    <property type="match status" value="1"/>
</dbReference>
<dbReference type="Gene3D" id="2.40.50.140">
    <property type="entry name" value="Nucleic acid-binding proteins"/>
    <property type="match status" value="1"/>
</dbReference>
<dbReference type="Gene3D" id="3.40.50.300">
    <property type="entry name" value="P-loop containing nucleotide triphosphate hydrolases"/>
    <property type="match status" value="1"/>
</dbReference>
<dbReference type="Gene3D" id="1.10.40.50">
    <property type="entry name" value="Probable gtpase engc, domain 3"/>
    <property type="match status" value="1"/>
</dbReference>
<dbReference type="HAMAP" id="MF_01820">
    <property type="entry name" value="GTPase_RsgA"/>
    <property type="match status" value="1"/>
</dbReference>
<dbReference type="InterPro" id="IPR030378">
    <property type="entry name" value="G_CP_dom"/>
</dbReference>
<dbReference type="InterPro" id="IPR012340">
    <property type="entry name" value="NA-bd_OB-fold"/>
</dbReference>
<dbReference type="InterPro" id="IPR027417">
    <property type="entry name" value="P-loop_NTPase"/>
</dbReference>
<dbReference type="InterPro" id="IPR004881">
    <property type="entry name" value="Ribosome_biogen_GTPase_RsgA"/>
</dbReference>
<dbReference type="InterPro" id="IPR010914">
    <property type="entry name" value="RsgA_GTPase_dom"/>
</dbReference>
<dbReference type="NCBIfam" id="NF008931">
    <property type="entry name" value="PRK12288.1"/>
    <property type="match status" value="1"/>
</dbReference>
<dbReference type="NCBIfam" id="TIGR00157">
    <property type="entry name" value="ribosome small subunit-dependent GTPase A"/>
    <property type="match status" value="1"/>
</dbReference>
<dbReference type="PANTHER" id="PTHR32120">
    <property type="entry name" value="SMALL RIBOSOMAL SUBUNIT BIOGENESIS GTPASE RSGA"/>
    <property type="match status" value="1"/>
</dbReference>
<dbReference type="PANTHER" id="PTHR32120:SF11">
    <property type="entry name" value="SMALL RIBOSOMAL SUBUNIT BIOGENESIS GTPASE RSGA 1, MITOCHONDRIAL-RELATED"/>
    <property type="match status" value="1"/>
</dbReference>
<dbReference type="Pfam" id="PF03193">
    <property type="entry name" value="RsgA_GTPase"/>
    <property type="match status" value="1"/>
</dbReference>
<dbReference type="SUPFAM" id="SSF52540">
    <property type="entry name" value="P-loop containing nucleoside triphosphate hydrolases"/>
    <property type="match status" value="1"/>
</dbReference>
<dbReference type="PROSITE" id="PS50936">
    <property type="entry name" value="ENGC_GTPASE"/>
    <property type="match status" value="1"/>
</dbReference>
<dbReference type="PROSITE" id="PS51721">
    <property type="entry name" value="G_CP"/>
    <property type="match status" value="1"/>
</dbReference>
<evidence type="ECO:0000255" key="1">
    <source>
        <dbReference type="HAMAP-Rule" id="MF_01820"/>
    </source>
</evidence>
<evidence type="ECO:0000255" key="2">
    <source>
        <dbReference type="PROSITE-ProRule" id="PRU01058"/>
    </source>
</evidence>
<evidence type="ECO:0000256" key="3">
    <source>
        <dbReference type="SAM" id="MobiDB-lite"/>
    </source>
</evidence>
<name>RSGA_MANSM</name>